<name>MDH_TOBAC</name>
<feature type="chain" id="PRO_0000423025" description="Malate dehydrogenase">
    <location>
        <begin position="1"/>
        <end position="332"/>
    </location>
</feature>
<feature type="active site" description="Proton acceptor" evidence="2">
    <location>
        <position position="188"/>
    </location>
</feature>
<feature type="binding site" evidence="3">
    <location>
        <begin position="16"/>
        <end position="17"/>
    </location>
    <ligand>
        <name>NAD(+)</name>
        <dbReference type="ChEBI" id="CHEBI:57540"/>
    </ligand>
</feature>
<feature type="binding site" evidence="3">
    <location>
        <position position="43"/>
    </location>
    <ligand>
        <name>NAD(+)</name>
        <dbReference type="ChEBI" id="CHEBI:57540"/>
    </ligand>
</feature>
<feature type="binding site" evidence="3">
    <location>
        <position position="90"/>
    </location>
    <ligand>
        <name>NAD(+)</name>
        <dbReference type="ChEBI" id="CHEBI:57540"/>
    </ligand>
</feature>
<feature type="binding site" evidence="3">
    <location>
        <position position="99"/>
    </location>
    <ligand>
        <name>oxaloacetate</name>
        <dbReference type="ChEBI" id="CHEBI:16452"/>
    </ligand>
</feature>
<feature type="binding site" evidence="3">
    <location>
        <position position="113"/>
    </location>
    <ligand>
        <name>NAD(+)</name>
        <dbReference type="ChEBI" id="CHEBI:57540"/>
    </ligand>
</feature>
<feature type="binding site" evidence="3">
    <location>
        <position position="132"/>
    </location>
    <ligand>
        <name>NAD(+)</name>
        <dbReference type="ChEBI" id="CHEBI:57540"/>
    </ligand>
</feature>
<feature type="binding site" evidence="3">
    <location>
        <position position="132"/>
    </location>
    <ligand>
        <name>oxaloacetate</name>
        <dbReference type="ChEBI" id="CHEBI:16452"/>
    </ligand>
</feature>
<feature type="binding site" evidence="3">
    <location>
        <position position="163"/>
    </location>
    <ligand>
        <name>oxaloacetate</name>
        <dbReference type="ChEBI" id="CHEBI:16452"/>
    </ligand>
</feature>
<feature type="binding site" evidence="3">
    <location>
        <position position="188"/>
    </location>
    <ligand>
        <name>oxaloacetate</name>
        <dbReference type="ChEBI" id="CHEBI:16452"/>
    </ligand>
</feature>
<feature type="binding site" evidence="3">
    <location>
        <position position="243"/>
    </location>
    <ligand>
        <name>oxaloacetate</name>
        <dbReference type="ChEBI" id="CHEBI:16452"/>
    </ligand>
</feature>
<protein>
    <recommendedName>
        <fullName>Malate dehydrogenase</fullName>
        <shortName>NtRed-2</shortName>
        <ecNumber>1.1.1.37</ecNumber>
    </recommendedName>
</protein>
<sequence length="332" mass="35408">MAKDPVRVLVTGAAGQIGYALVPMIARGVMLGADQPVILHMLDIPPAAEALNGVKMELVDAAFPLLKGVVATTDAVEACTGVNVAVMVGGFPRKEGMERKDVMSKNVSIYKSQASALEKHAAPNCKVLVVANPANTNALILKEYAPSIPEKNISCLTRLDHNRALGQISERLNVQVSDVKNVIIWGNHSSSQYPDVNHATVATPAGEKPVRELVADDAWLNGEFISTVQQRGAAIIKARKLSSALSAASSACDHIRDWVLGTPEGTWVSMGVYSDGSYNVPAGLIYSFPVACKNGEWSIVQGLPIDEFSRKKLDATAEELSEEKALAYSCLT</sequence>
<organism>
    <name type="scientific">Nicotiana tabacum</name>
    <name type="common">Common tobacco</name>
    <dbReference type="NCBI Taxonomy" id="4097"/>
    <lineage>
        <taxon>Eukaryota</taxon>
        <taxon>Viridiplantae</taxon>
        <taxon>Streptophyta</taxon>
        <taxon>Embryophyta</taxon>
        <taxon>Tracheophyta</taxon>
        <taxon>Spermatophyta</taxon>
        <taxon>Magnoliopsida</taxon>
        <taxon>eudicotyledons</taxon>
        <taxon>Gunneridae</taxon>
        <taxon>Pentapetalae</taxon>
        <taxon>asterids</taxon>
        <taxon>lamiids</taxon>
        <taxon>Solanales</taxon>
        <taxon>Solanaceae</taxon>
        <taxon>Nicotianoideae</taxon>
        <taxon>Nicotianeae</taxon>
        <taxon>Nicotiana</taxon>
    </lineage>
</organism>
<reference key="1">
    <citation type="submission" date="2000-10" db="EMBL/GenBank/DDBJ databases">
        <title>Nicotiana tabacum cDNA encoding cytosolic malate dehydrogenase.</title>
        <authorList>
            <person name="Shen W.H."/>
        </authorList>
    </citation>
    <scope>NUCLEOTIDE SEQUENCE [MRNA]</scope>
</reference>
<reference key="2">
    <citation type="journal article" date="2008" name="Bioorg. Chem.">
        <title>An enone reductase from Nicotiana tabacum: cDNA cloning, expression in Escherichia coli, and reduction of enones with the recombinant proteins.</title>
        <authorList>
            <person name="Matsushima A."/>
            <person name="Sato Y."/>
            <person name="Otsuka M."/>
            <person name="Watanabe T."/>
            <person name="Yamamoto H."/>
            <person name="Hirata T."/>
        </authorList>
    </citation>
    <scope>PROTEIN SEQUENCE OF 127-138</scope>
    <scope>FUNCTION</scope>
    <scope>CATALYTIC ACTIVITY</scope>
</reference>
<accession>Q9FSF0</accession>
<keyword id="KW-0963">Cytoplasm</keyword>
<keyword id="KW-0903">Direct protein sequencing</keyword>
<keyword id="KW-0520">NAD</keyword>
<keyword id="KW-0560">Oxidoreductase</keyword>
<keyword id="KW-1185">Reference proteome</keyword>
<keyword id="KW-0816">Tricarboxylic acid cycle</keyword>
<dbReference type="EC" id="1.1.1.37"/>
<dbReference type="EMBL" id="AJ299256">
    <property type="protein sequence ID" value="CAC12826.1"/>
    <property type="molecule type" value="mRNA"/>
</dbReference>
<dbReference type="RefSeq" id="NP_001312078.1">
    <property type="nucleotide sequence ID" value="NM_001325149.1"/>
</dbReference>
<dbReference type="SMR" id="Q9FSF0"/>
<dbReference type="STRING" id="4097.Q9FSF0"/>
<dbReference type="PaxDb" id="4097-Q9FSF0"/>
<dbReference type="GeneID" id="107772922"/>
<dbReference type="KEGG" id="nta:107772922"/>
<dbReference type="OMA" id="HTWVNGT"/>
<dbReference type="OrthoDB" id="4069699at2759"/>
<dbReference type="PhylomeDB" id="Q9FSF0"/>
<dbReference type="Proteomes" id="UP000084051">
    <property type="component" value="Unplaced"/>
</dbReference>
<dbReference type="GO" id="GO:0005737">
    <property type="term" value="C:cytoplasm"/>
    <property type="evidence" value="ECO:0007669"/>
    <property type="project" value="UniProtKB-SubCell"/>
</dbReference>
<dbReference type="GO" id="GO:0030060">
    <property type="term" value="F:L-malate dehydrogenase (NAD+) activity"/>
    <property type="evidence" value="ECO:0000318"/>
    <property type="project" value="GO_Central"/>
</dbReference>
<dbReference type="GO" id="GO:0006108">
    <property type="term" value="P:malate metabolic process"/>
    <property type="evidence" value="ECO:0000318"/>
    <property type="project" value="GO_Central"/>
</dbReference>
<dbReference type="GO" id="GO:0006734">
    <property type="term" value="P:NADH metabolic process"/>
    <property type="evidence" value="ECO:0000318"/>
    <property type="project" value="GO_Central"/>
</dbReference>
<dbReference type="GO" id="GO:0006107">
    <property type="term" value="P:oxaloacetate metabolic process"/>
    <property type="evidence" value="ECO:0000318"/>
    <property type="project" value="GO_Central"/>
</dbReference>
<dbReference type="GO" id="GO:0006099">
    <property type="term" value="P:tricarboxylic acid cycle"/>
    <property type="evidence" value="ECO:0000318"/>
    <property type="project" value="GO_Central"/>
</dbReference>
<dbReference type="CDD" id="cd01336">
    <property type="entry name" value="MDH_cytoplasmic_cytosolic"/>
    <property type="match status" value="1"/>
</dbReference>
<dbReference type="FunFam" id="3.40.50.720:FF:000010">
    <property type="entry name" value="Malate dehydrogenase"/>
    <property type="match status" value="1"/>
</dbReference>
<dbReference type="FunFam" id="3.90.110.10:FF:000002">
    <property type="entry name" value="Malate dehydrogenase"/>
    <property type="match status" value="1"/>
</dbReference>
<dbReference type="Gene3D" id="3.90.110.10">
    <property type="entry name" value="Lactate dehydrogenase/glycoside hydrolase, family 4, C-terminal"/>
    <property type="match status" value="1"/>
</dbReference>
<dbReference type="Gene3D" id="3.40.50.720">
    <property type="entry name" value="NAD(P)-binding Rossmann-like Domain"/>
    <property type="match status" value="1"/>
</dbReference>
<dbReference type="InterPro" id="IPR001557">
    <property type="entry name" value="L-lactate/malate_DH"/>
</dbReference>
<dbReference type="InterPro" id="IPR022383">
    <property type="entry name" value="Lactate/malate_DH_C"/>
</dbReference>
<dbReference type="InterPro" id="IPR001236">
    <property type="entry name" value="Lactate/malate_DH_N"/>
</dbReference>
<dbReference type="InterPro" id="IPR015955">
    <property type="entry name" value="Lactate_DH/Glyco_Ohase_4_C"/>
</dbReference>
<dbReference type="InterPro" id="IPR001252">
    <property type="entry name" value="Malate_DH_AS"/>
</dbReference>
<dbReference type="InterPro" id="IPR011274">
    <property type="entry name" value="Malate_DH_NAD-dep_euk"/>
</dbReference>
<dbReference type="InterPro" id="IPR010945">
    <property type="entry name" value="Malate_DH_type2"/>
</dbReference>
<dbReference type="InterPro" id="IPR036291">
    <property type="entry name" value="NAD(P)-bd_dom_sf"/>
</dbReference>
<dbReference type="NCBIfam" id="TIGR01759">
    <property type="entry name" value="MalateDH-SF1"/>
    <property type="match status" value="1"/>
</dbReference>
<dbReference type="NCBIfam" id="TIGR01758">
    <property type="entry name" value="MDH_euk_cyt"/>
    <property type="match status" value="1"/>
</dbReference>
<dbReference type="NCBIfam" id="NF003916">
    <property type="entry name" value="PRK05442.1"/>
    <property type="match status" value="1"/>
</dbReference>
<dbReference type="PANTHER" id="PTHR23382">
    <property type="entry name" value="MALATE DEHYDROGENASE"/>
    <property type="match status" value="1"/>
</dbReference>
<dbReference type="Pfam" id="PF02866">
    <property type="entry name" value="Ldh_1_C"/>
    <property type="match status" value="1"/>
</dbReference>
<dbReference type="Pfam" id="PF00056">
    <property type="entry name" value="Ldh_1_N"/>
    <property type="match status" value="1"/>
</dbReference>
<dbReference type="PIRSF" id="PIRSF000102">
    <property type="entry name" value="Lac_mal_DH"/>
    <property type="match status" value="1"/>
</dbReference>
<dbReference type="SUPFAM" id="SSF56327">
    <property type="entry name" value="LDH C-terminal domain-like"/>
    <property type="match status" value="1"/>
</dbReference>
<dbReference type="SUPFAM" id="SSF51735">
    <property type="entry name" value="NAD(P)-binding Rossmann-fold domains"/>
    <property type="match status" value="1"/>
</dbReference>
<dbReference type="PROSITE" id="PS00068">
    <property type="entry name" value="MDH"/>
    <property type="match status" value="1"/>
</dbReference>
<comment type="function">
    <text evidence="5">Catalyzes the reduction of the carbonyl group of oxalacetic acid. No activity with pulegone.</text>
</comment>
<comment type="catalytic activity">
    <reaction evidence="4 5">
        <text>(S)-malate + NAD(+) = oxaloacetate + NADH + H(+)</text>
        <dbReference type="Rhea" id="RHEA:21432"/>
        <dbReference type="ChEBI" id="CHEBI:15378"/>
        <dbReference type="ChEBI" id="CHEBI:15589"/>
        <dbReference type="ChEBI" id="CHEBI:16452"/>
        <dbReference type="ChEBI" id="CHEBI:57540"/>
        <dbReference type="ChEBI" id="CHEBI:57945"/>
        <dbReference type="EC" id="1.1.1.37"/>
    </reaction>
</comment>
<comment type="subunit">
    <text evidence="1">Homodimer.</text>
</comment>
<comment type="subcellular location">
    <subcellularLocation>
        <location evidence="1">Cytoplasm</location>
    </subcellularLocation>
</comment>
<comment type="similarity">
    <text evidence="6">Belongs to the LDH/MDH superfamily. MDH type 2 family.</text>
</comment>
<evidence type="ECO:0000250" key="1"/>
<evidence type="ECO:0000250" key="2">
    <source>
        <dbReference type="UniProtKB" id="P11708"/>
    </source>
</evidence>
<evidence type="ECO:0000250" key="3">
    <source>
        <dbReference type="UniProtKB" id="P93819"/>
    </source>
</evidence>
<evidence type="ECO:0000255" key="4">
    <source>
        <dbReference type="PROSITE-ProRule" id="PRU10004"/>
    </source>
</evidence>
<evidence type="ECO:0000269" key="5">
    <source>
    </source>
</evidence>
<evidence type="ECO:0000305" key="6"/>
<gene>
    <name type="primary">MD1</name>
</gene>
<proteinExistence type="evidence at protein level"/>